<gene>
    <name type="ordered locus">MT1325</name>
</gene>
<sequence length="161" mass="17209">MRMSAKAEYAVRAMVQLATAASGTVVKTDDLAAAQGIPPQFLVDILTNLRTDRLVRSHRGREGGYELARPGTEISIADVLRCIDGPLASVRDIGLGDLPYSGPTTALTDVWRALRASMRSVLEETTLADVAGGALPEHVAQLADDYRAQESTRHGASRHGD</sequence>
<organism>
    <name type="scientific">Mycobacterium tuberculosis (strain CDC 1551 / Oshkosh)</name>
    <dbReference type="NCBI Taxonomy" id="83331"/>
    <lineage>
        <taxon>Bacteria</taxon>
        <taxon>Bacillati</taxon>
        <taxon>Actinomycetota</taxon>
        <taxon>Actinomycetes</taxon>
        <taxon>Mycobacteriales</taxon>
        <taxon>Mycobacteriaceae</taxon>
        <taxon>Mycobacterium</taxon>
        <taxon>Mycobacterium tuberculosis complex</taxon>
    </lineage>
</organism>
<protein>
    <recommendedName>
        <fullName>Putative HTH-type transcriptional regulator MT1325</fullName>
    </recommendedName>
</protein>
<keyword id="KW-0238">DNA-binding</keyword>
<keyword id="KW-1185">Reference proteome</keyword>
<accession>P9WME2</accession>
<accession>L0T970</accession>
<accession>P67159</accession>
<accession>Q10613</accession>
<evidence type="ECO:0000255" key="1">
    <source>
        <dbReference type="PROSITE-ProRule" id="PRU00540"/>
    </source>
</evidence>
<dbReference type="EMBL" id="AE000516">
    <property type="protein sequence ID" value="AAK45586.1"/>
    <property type="molecule type" value="Genomic_DNA"/>
</dbReference>
<dbReference type="PIR" id="C70772">
    <property type="entry name" value="C70772"/>
</dbReference>
<dbReference type="RefSeq" id="WP_003406624.1">
    <property type="nucleotide sequence ID" value="NZ_KK341227.1"/>
</dbReference>
<dbReference type="SMR" id="P9WME2"/>
<dbReference type="KEGG" id="mtc:MT1325"/>
<dbReference type="PATRIC" id="fig|83331.31.peg.1431"/>
<dbReference type="HOGENOM" id="CLU_107144_1_1_11"/>
<dbReference type="Proteomes" id="UP000001020">
    <property type="component" value="Chromosome"/>
</dbReference>
<dbReference type="GO" id="GO:0005829">
    <property type="term" value="C:cytosol"/>
    <property type="evidence" value="ECO:0007669"/>
    <property type="project" value="TreeGrafter"/>
</dbReference>
<dbReference type="GO" id="GO:0003677">
    <property type="term" value="F:DNA binding"/>
    <property type="evidence" value="ECO:0007669"/>
    <property type="project" value="UniProtKB-KW"/>
</dbReference>
<dbReference type="GO" id="GO:0003700">
    <property type="term" value="F:DNA-binding transcription factor activity"/>
    <property type="evidence" value="ECO:0007669"/>
    <property type="project" value="TreeGrafter"/>
</dbReference>
<dbReference type="FunFam" id="1.10.10.10:FF:000444">
    <property type="entry name" value="Rrf2 family transcriptional regulator"/>
    <property type="match status" value="1"/>
</dbReference>
<dbReference type="Gene3D" id="1.10.10.10">
    <property type="entry name" value="Winged helix-like DNA-binding domain superfamily/Winged helix DNA-binding domain"/>
    <property type="match status" value="1"/>
</dbReference>
<dbReference type="InterPro" id="IPR030489">
    <property type="entry name" value="TR_Rrf2-type_CS"/>
</dbReference>
<dbReference type="InterPro" id="IPR000944">
    <property type="entry name" value="Tscrpt_reg_Rrf2"/>
</dbReference>
<dbReference type="InterPro" id="IPR036388">
    <property type="entry name" value="WH-like_DNA-bd_sf"/>
</dbReference>
<dbReference type="InterPro" id="IPR036390">
    <property type="entry name" value="WH_DNA-bd_sf"/>
</dbReference>
<dbReference type="NCBIfam" id="TIGR00738">
    <property type="entry name" value="rrf2_super"/>
    <property type="match status" value="1"/>
</dbReference>
<dbReference type="PANTHER" id="PTHR33221:SF5">
    <property type="entry name" value="HTH-TYPE TRANSCRIPTIONAL REGULATOR ISCR"/>
    <property type="match status" value="1"/>
</dbReference>
<dbReference type="PANTHER" id="PTHR33221">
    <property type="entry name" value="WINGED HELIX-TURN-HELIX TRANSCRIPTIONAL REGULATOR, RRF2 FAMILY"/>
    <property type="match status" value="1"/>
</dbReference>
<dbReference type="Pfam" id="PF02082">
    <property type="entry name" value="Rrf2"/>
    <property type="match status" value="1"/>
</dbReference>
<dbReference type="SUPFAM" id="SSF46785">
    <property type="entry name" value="Winged helix' DNA-binding domain"/>
    <property type="match status" value="1"/>
</dbReference>
<dbReference type="PROSITE" id="PS01332">
    <property type="entry name" value="HTH_RRF2_1"/>
    <property type="match status" value="1"/>
</dbReference>
<dbReference type="PROSITE" id="PS51197">
    <property type="entry name" value="HTH_RRF2_2"/>
    <property type="match status" value="1"/>
</dbReference>
<reference key="1">
    <citation type="journal article" date="2002" name="J. Bacteriol.">
        <title>Whole-genome comparison of Mycobacterium tuberculosis clinical and laboratory strains.</title>
        <authorList>
            <person name="Fleischmann R.D."/>
            <person name="Alland D."/>
            <person name="Eisen J.A."/>
            <person name="Carpenter L."/>
            <person name="White O."/>
            <person name="Peterson J.D."/>
            <person name="DeBoy R.T."/>
            <person name="Dodson R.J."/>
            <person name="Gwinn M.L."/>
            <person name="Haft D.H."/>
            <person name="Hickey E.K."/>
            <person name="Kolonay J.F."/>
            <person name="Nelson W.C."/>
            <person name="Umayam L.A."/>
            <person name="Ermolaeva M.D."/>
            <person name="Salzberg S.L."/>
            <person name="Delcher A."/>
            <person name="Utterback T.R."/>
            <person name="Weidman J.F."/>
            <person name="Khouri H.M."/>
            <person name="Gill J."/>
            <person name="Mikula A."/>
            <person name="Bishai W."/>
            <person name="Jacobs W.R. Jr."/>
            <person name="Venter J.C."/>
            <person name="Fraser C.M."/>
        </authorList>
    </citation>
    <scope>NUCLEOTIDE SEQUENCE [LARGE SCALE GENOMIC DNA]</scope>
    <source>
        <strain>CDC 1551 / Oshkosh</strain>
    </source>
</reference>
<proteinExistence type="predicted"/>
<feature type="chain" id="PRO_0000427319" description="Putative HTH-type transcriptional regulator MT1325">
    <location>
        <begin position="1"/>
        <end position="161"/>
    </location>
</feature>
<feature type="domain" description="HTH rrf2-type" evidence="1">
    <location>
        <begin position="2"/>
        <end position="132"/>
    </location>
</feature>
<name>Y1287_MYCTO</name>